<dbReference type="EMBL" id="BX572599">
    <property type="protein sequence ID" value="CAE27452.1"/>
    <property type="molecule type" value="Genomic_DNA"/>
</dbReference>
<dbReference type="STRING" id="258594.RPA2011"/>
<dbReference type="eggNOG" id="COG3158">
    <property type="taxonomic scope" value="Bacteria"/>
</dbReference>
<dbReference type="HOGENOM" id="CLU_008142_4_2_5"/>
<dbReference type="PhylomeDB" id="Q6N893"/>
<dbReference type="GO" id="GO:0005886">
    <property type="term" value="C:plasma membrane"/>
    <property type="evidence" value="ECO:0007669"/>
    <property type="project" value="UniProtKB-SubCell"/>
</dbReference>
<dbReference type="GO" id="GO:0015079">
    <property type="term" value="F:potassium ion transmembrane transporter activity"/>
    <property type="evidence" value="ECO:0007669"/>
    <property type="project" value="UniProtKB-UniRule"/>
</dbReference>
<dbReference type="GO" id="GO:0015293">
    <property type="term" value="F:symporter activity"/>
    <property type="evidence" value="ECO:0007669"/>
    <property type="project" value="UniProtKB-UniRule"/>
</dbReference>
<dbReference type="HAMAP" id="MF_01522">
    <property type="entry name" value="Kup"/>
    <property type="match status" value="1"/>
</dbReference>
<dbReference type="InterPro" id="IPR003855">
    <property type="entry name" value="K+_transporter"/>
</dbReference>
<dbReference type="InterPro" id="IPR053952">
    <property type="entry name" value="K_trans_C"/>
</dbReference>
<dbReference type="InterPro" id="IPR053951">
    <property type="entry name" value="K_trans_N"/>
</dbReference>
<dbReference type="InterPro" id="IPR023051">
    <property type="entry name" value="Kup"/>
</dbReference>
<dbReference type="PANTHER" id="PTHR30540:SF79">
    <property type="entry name" value="LOW AFFINITY POTASSIUM TRANSPORT SYSTEM PROTEIN KUP"/>
    <property type="match status" value="1"/>
</dbReference>
<dbReference type="PANTHER" id="PTHR30540">
    <property type="entry name" value="OSMOTIC STRESS POTASSIUM TRANSPORTER"/>
    <property type="match status" value="1"/>
</dbReference>
<dbReference type="Pfam" id="PF02705">
    <property type="entry name" value="K_trans"/>
    <property type="match status" value="1"/>
</dbReference>
<dbReference type="Pfam" id="PF22776">
    <property type="entry name" value="K_trans_C"/>
    <property type="match status" value="1"/>
</dbReference>
<reference key="1">
    <citation type="journal article" date="2004" name="Nat. Biotechnol.">
        <title>Complete genome sequence of the metabolically versatile photosynthetic bacterium Rhodopseudomonas palustris.</title>
        <authorList>
            <person name="Larimer F.W."/>
            <person name="Chain P."/>
            <person name="Hauser L."/>
            <person name="Lamerdin J.E."/>
            <person name="Malfatti S."/>
            <person name="Do L."/>
            <person name="Land M.L."/>
            <person name="Pelletier D.A."/>
            <person name="Beatty J.T."/>
            <person name="Lang A.S."/>
            <person name="Tabita F.R."/>
            <person name="Gibson J.L."/>
            <person name="Hanson T.E."/>
            <person name="Bobst C."/>
            <person name="Torres y Torres J.L."/>
            <person name="Peres C."/>
            <person name="Harrison F.H."/>
            <person name="Gibson J."/>
            <person name="Harwood C.S."/>
        </authorList>
    </citation>
    <scope>NUCLEOTIDE SEQUENCE [LARGE SCALE GENOMIC DNA]</scope>
    <source>
        <strain>ATCC BAA-98 / CGA009</strain>
    </source>
</reference>
<feature type="chain" id="PRO_0000209053" description="Probable potassium transport system protein Kup 3">
    <location>
        <begin position="1"/>
        <end position="651"/>
    </location>
</feature>
<feature type="transmembrane region" description="Helical" evidence="1">
    <location>
        <begin position="38"/>
        <end position="58"/>
    </location>
</feature>
<feature type="transmembrane region" description="Helical" evidence="1">
    <location>
        <begin position="77"/>
        <end position="97"/>
    </location>
</feature>
<feature type="transmembrane region" description="Helical" evidence="1">
    <location>
        <begin position="129"/>
        <end position="149"/>
    </location>
</feature>
<feature type="transmembrane region" description="Helical" evidence="1">
    <location>
        <begin position="166"/>
        <end position="186"/>
    </location>
</feature>
<feature type="transmembrane region" description="Helical" evidence="1">
    <location>
        <begin position="197"/>
        <end position="217"/>
    </location>
</feature>
<feature type="transmembrane region" description="Helical" evidence="1">
    <location>
        <begin position="242"/>
        <end position="262"/>
    </location>
</feature>
<feature type="transmembrane region" description="Helical" evidence="1">
    <location>
        <begin position="276"/>
        <end position="296"/>
    </location>
</feature>
<feature type="transmembrane region" description="Helical" evidence="1">
    <location>
        <begin position="314"/>
        <end position="334"/>
    </location>
</feature>
<feature type="transmembrane region" description="Helical" evidence="1">
    <location>
        <begin position="366"/>
        <end position="386"/>
    </location>
</feature>
<feature type="transmembrane region" description="Helical" evidence="1">
    <location>
        <begin position="396"/>
        <end position="416"/>
    </location>
</feature>
<feature type="transmembrane region" description="Helical" evidence="1">
    <location>
        <begin position="421"/>
        <end position="441"/>
    </location>
</feature>
<feature type="transmembrane region" description="Helical" evidence="1">
    <location>
        <begin position="448"/>
        <end position="468"/>
    </location>
</feature>
<sequence>MVLAGVAQRPWIKSCDRAFYGSMALSAATTEAPEQTGFWALTLGGIGVVFGDIGTSPLYAFREAVAGAAGGAPASRVLVLGVLSLILWALLIVVTAKYVLLLLRADNNGEGGTLSLMALGRRALGRRSLFLLVLGVIGASMFIGDSMITPAISVLSAIEGLKIAAPALEHYVVPLTVLVLVLLFGVQSHGTAIVARFFGPVMLVWFATLAAMGAMHIMDDPSVLAAINPWYAAQFLASHGTIGLVTLGAVFLAVTGGEALYADLGHFGRRPIQTAWLGFVLPALLINYFGQGALVLSNPAALENPFYKMVPEALVLPLTLMATAATVIASQAVITGAFSLISQAVQLGLLPRFEVRYTSETNAGQIYLPRVNALLLIGVLLLVLLFQTSSRLASAYGIAVSTTMVVDGIMGFVVIWKLWRWSWPAAALVILPLVLVDAMFFSANLLKLLDGAWVPLLFGLAMAVVIWTWRRGVALLMIKSRRAEVPLDDLIGSLEKHPPHIVKGTAVFLTADAEFVPPALLHNLKHNKVLHEHNVILTIETMHTPRVEAADRIRLVKVSEKFSKVALRFGFMETPNVPKALVLARKLGWEFDIMSTSFFVSRRSLKPAAQSEMWRWQTKLFVALAKSANDATDYFQIPTGRVVEVGAQVTI</sequence>
<accession>Q6N893</accession>
<name>KUP3_RHOPA</name>
<keyword id="KW-0997">Cell inner membrane</keyword>
<keyword id="KW-1003">Cell membrane</keyword>
<keyword id="KW-0406">Ion transport</keyword>
<keyword id="KW-0472">Membrane</keyword>
<keyword id="KW-0630">Potassium</keyword>
<keyword id="KW-0633">Potassium transport</keyword>
<keyword id="KW-0769">Symport</keyword>
<keyword id="KW-0812">Transmembrane</keyword>
<keyword id="KW-1133">Transmembrane helix</keyword>
<keyword id="KW-0813">Transport</keyword>
<organism>
    <name type="scientific">Rhodopseudomonas palustris (strain ATCC BAA-98 / CGA009)</name>
    <dbReference type="NCBI Taxonomy" id="258594"/>
    <lineage>
        <taxon>Bacteria</taxon>
        <taxon>Pseudomonadati</taxon>
        <taxon>Pseudomonadota</taxon>
        <taxon>Alphaproteobacteria</taxon>
        <taxon>Hyphomicrobiales</taxon>
        <taxon>Nitrobacteraceae</taxon>
        <taxon>Rhodopseudomonas</taxon>
    </lineage>
</organism>
<protein>
    <recommendedName>
        <fullName evidence="1">Probable potassium transport system protein Kup 3</fullName>
    </recommendedName>
</protein>
<comment type="function">
    <text evidence="1">Transport of potassium into the cell. Likely operates as a K(+):H(+) symporter.</text>
</comment>
<comment type="catalytic activity">
    <reaction evidence="1">
        <text>K(+)(in) + H(+)(in) = K(+)(out) + H(+)(out)</text>
        <dbReference type="Rhea" id="RHEA:28490"/>
        <dbReference type="ChEBI" id="CHEBI:15378"/>
        <dbReference type="ChEBI" id="CHEBI:29103"/>
    </reaction>
    <physiologicalReaction direction="right-to-left" evidence="1">
        <dbReference type="Rhea" id="RHEA:28492"/>
    </physiologicalReaction>
</comment>
<comment type="subcellular location">
    <subcellularLocation>
        <location evidence="1">Cell inner membrane</location>
        <topology evidence="1">Multi-pass membrane protein</topology>
    </subcellularLocation>
</comment>
<comment type="similarity">
    <text evidence="1">Belongs to the HAK/KUP transporter (TC 2.A.72) family.</text>
</comment>
<evidence type="ECO:0000255" key="1">
    <source>
        <dbReference type="HAMAP-Rule" id="MF_01522"/>
    </source>
</evidence>
<gene>
    <name evidence="1" type="primary">kup3</name>
    <name type="ordered locus">RPA2011</name>
</gene>
<proteinExistence type="inferred from homology"/>